<gene>
    <name evidence="1" type="primary">ruvC</name>
    <name type="ordered locus">GFO_0072</name>
</gene>
<protein>
    <recommendedName>
        <fullName evidence="1">Crossover junction endodeoxyribonuclease RuvC</fullName>
        <ecNumber evidence="1">3.1.21.10</ecNumber>
    </recommendedName>
    <alternativeName>
        <fullName evidence="1">Holliday junction nuclease RuvC</fullName>
    </alternativeName>
    <alternativeName>
        <fullName evidence="1">Holliday junction resolvase RuvC</fullName>
    </alternativeName>
</protein>
<sequence>MSKSSEKSVLKSERIILGIDPGTTIMGFGLIKVENKKMSFIQMNELQLSKYKDHYVKLKLIFERTIELIDNYHPDEIAIEAPFFGKNVQSMLKLGRAQGVAMAAGLSREVPITEYLPKKIKMAITGNGNASKEQVARMLQSQLNIGKLPKNLDATDGLAAAVCHFYNSGKTEIGKSYTGWDAFVKQNPKKIR</sequence>
<dbReference type="EC" id="3.1.21.10" evidence="1"/>
<dbReference type="EMBL" id="CU207366">
    <property type="protein sequence ID" value="CAL65062.1"/>
    <property type="molecule type" value="Genomic_DNA"/>
</dbReference>
<dbReference type="SMR" id="A0LXG7"/>
<dbReference type="STRING" id="411154.GFO_0072"/>
<dbReference type="KEGG" id="gfo:GFO_0072"/>
<dbReference type="eggNOG" id="COG0817">
    <property type="taxonomic scope" value="Bacteria"/>
</dbReference>
<dbReference type="HOGENOM" id="CLU_091257_3_0_10"/>
<dbReference type="Proteomes" id="UP000000755">
    <property type="component" value="Chromosome"/>
</dbReference>
<dbReference type="GO" id="GO:0005737">
    <property type="term" value="C:cytoplasm"/>
    <property type="evidence" value="ECO:0007669"/>
    <property type="project" value="UniProtKB-SubCell"/>
</dbReference>
<dbReference type="GO" id="GO:0048476">
    <property type="term" value="C:Holliday junction resolvase complex"/>
    <property type="evidence" value="ECO:0007669"/>
    <property type="project" value="UniProtKB-UniRule"/>
</dbReference>
<dbReference type="GO" id="GO:0008821">
    <property type="term" value="F:crossover junction DNA endonuclease activity"/>
    <property type="evidence" value="ECO:0007669"/>
    <property type="project" value="UniProtKB-UniRule"/>
</dbReference>
<dbReference type="GO" id="GO:0003677">
    <property type="term" value="F:DNA binding"/>
    <property type="evidence" value="ECO:0007669"/>
    <property type="project" value="UniProtKB-KW"/>
</dbReference>
<dbReference type="GO" id="GO:0000287">
    <property type="term" value="F:magnesium ion binding"/>
    <property type="evidence" value="ECO:0007669"/>
    <property type="project" value="UniProtKB-UniRule"/>
</dbReference>
<dbReference type="GO" id="GO:0006310">
    <property type="term" value="P:DNA recombination"/>
    <property type="evidence" value="ECO:0007669"/>
    <property type="project" value="UniProtKB-UniRule"/>
</dbReference>
<dbReference type="GO" id="GO:0006281">
    <property type="term" value="P:DNA repair"/>
    <property type="evidence" value="ECO:0007669"/>
    <property type="project" value="UniProtKB-UniRule"/>
</dbReference>
<dbReference type="CDD" id="cd16962">
    <property type="entry name" value="RuvC"/>
    <property type="match status" value="1"/>
</dbReference>
<dbReference type="FunFam" id="3.30.420.10:FF:000002">
    <property type="entry name" value="Crossover junction endodeoxyribonuclease RuvC"/>
    <property type="match status" value="1"/>
</dbReference>
<dbReference type="Gene3D" id="3.30.420.10">
    <property type="entry name" value="Ribonuclease H-like superfamily/Ribonuclease H"/>
    <property type="match status" value="1"/>
</dbReference>
<dbReference type="HAMAP" id="MF_00034">
    <property type="entry name" value="RuvC"/>
    <property type="match status" value="1"/>
</dbReference>
<dbReference type="InterPro" id="IPR012337">
    <property type="entry name" value="RNaseH-like_sf"/>
</dbReference>
<dbReference type="InterPro" id="IPR036397">
    <property type="entry name" value="RNaseH_sf"/>
</dbReference>
<dbReference type="InterPro" id="IPR020563">
    <property type="entry name" value="X-over_junc_endoDNase_Mg_BS"/>
</dbReference>
<dbReference type="InterPro" id="IPR002176">
    <property type="entry name" value="X-over_junc_endoDNase_RuvC"/>
</dbReference>
<dbReference type="NCBIfam" id="TIGR00228">
    <property type="entry name" value="ruvC"/>
    <property type="match status" value="1"/>
</dbReference>
<dbReference type="PANTHER" id="PTHR30194">
    <property type="entry name" value="CROSSOVER JUNCTION ENDODEOXYRIBONUCLEASE RUVC"/>
    <property type="match status" value="1"/>
</dbReference>
<dbReference type="PANTHER" id="PTHR30194:SF3">
    <property type="entry name" value="CROSSOVER JUNCTION ENDODEOXYRIBONUCLEASE RUVC"/>
    <property type="match status" value="1"/>
</dbReference>
<dbReference type="Pfam" id="PF02075">
    <property type="entry name" value="RuvC"/>
    <property type="match status" value="1"/>
</dbReference>
<dbReference type="PRINTS" id="PR00696">
    <property type="entry name" value="RSOLVASERUVC"/>
</dbReference>
<dbReference type="SUPFAM" id="SSF53098">
    <property type="entry name" value="Ribonuclease H-like"/>
    <property type="match status" value="1"/>
</dbReference>
<dbReference type="PROSITE" id="PS01321">
    <property type="entry name" value="RUVC"/>
    <property type="match status" value="1"/>
</dbReference>
<feature type="chain" id="PRO_0000332421" description="Crossover junction endodeoxyribonuclease RuvC">
    <location>
        <begin position="1"/>
        <end position="192"/>
    </location>
</feature>
<feature type="active site" evidence="1">
    <location>
        <position position="20"/>
    </location>
</feature>
<feature type="active site" evidence="1">
    <location>
        <position position="80"/>
    </location>
</feature>
<feature type="active site" evidence="1">
    <location>
        <position position="153"/>
    </location>
</feature>
<feature type="binding site" evidence="1">
    <location>
        <position position="20"/>
    </location>
    <ligand>
        <name>Mg(2+)</name>
        <dbReference type="ChEBI" id="CHEBI:18420"/>
        <label>1</label>
    </ligand>
</feature>
<feature type="binding site" evidence="1">
    <location>
        <position position="80"/>
    </location>
    <ligand>
        <name>Mg(2+)</name>
        <dbReference type="ChEBI" id="CHEBI:18420"/>
        <label>2</label>
    </ligand>
</feature>
<feature type="binding site" evidence="1">
    <location>
        <position position="153"/>
    </location>
    <ligand>
        <name>Mg(2+)</name>
        <dbReference type="ChEBI" id="CHEBI:18420"/>
        <label>1</label>
    </ligand>
</feature>
<name>RUVC_CHRFK</name>
<evidence type="ECO:0000255" key="1">
    <source>
        <dbReference type="HAMAP-Rule" id="MF_00034"/>
    </source>
</evidence>
<accession>A0LXG7</accession>
<reference key="1">
    <citation type="journal article" date="2006" name="Environ. Microbiol.">
        <title>Whole genome analysis of the marine Bacteroidetes'Gramella forsetii' reveals adaptations to degradation of polymeric organic matter.</title>
        <authorList>
            <person name="Bauer M."/>
            <person name="Kube M."/>
            <person name="Teeling H."/>
            <person name="Richter M."/>
            <person name="Lombardot T."/>
            <person name="Allers E."/>
            <person name="Wuerdemann C.A."/>
            <person name="Quast C."/>
            <person name="Kuhl H."/>
            <person name="Knaust F."/>
            <person name="Woebken D."/>
            <person name="Bischof K."/>
            <person name="Mussmann M."/>
            <person name="Choudhuri J.V."/>
            <person name="Meyer F."/>
            <person name="Reinhardt R."/>
            <person name="Amann R.I."/>
            <person name="Gloeckner F.O."/>
        </authorList>
    </citation>
    <scope>NUCLEOTIDE SEQUENCE [LARGE SCALE GENOMIC DNA]</scope>
    <source>
        <strain>DSM 17595 / CGMCC 1.15422 / KT0803</strain>
    </source>
</reference>
<comment type="function">
    <text evidence="1">The RuvA-RuvB-RuvC complex processes Holliday junction (HJ) DNA during genetic recombination and DNA repair. Endonuclease that resolves HJ intermediates. Cleaves cruciform DNA by making single-stranded nicks across the HJ at symmetrical positions within the homologous arms, yielding a 5'-phosphate and a 3'-hydroxyl group; requires a central core of homology in the junction. The consensus cleavage sequence is 5'-(A/T)TT(C/G)-3'. Cleavage occurs on the 3'-side of the TT dinucleotide at the point of strand exchange. HJ branch migration catalyzed by RuvA-RuvB allows RuvC to scan DNA until it finds its consensus sequence, where it cleaves and resolves the cruciform DNA.</text>
</comment>
<comment type="catalytic activity">
    <reaction evidence="1">
        <text>Endonucleolytic cleavage at a junction such as a reciprocal single-stranded crossover between two homologous DNA duplexes (Holliday junction).</text>
        <dbReference type="EC" id="3.1.21.10"/>
    </reaction>
</comment>
<comment type="cofactor">
    <cofactor evidence="1">
        <name>Mg(2+)</name>
        <dbReference type="ChEBI" id="CHEBI:18420"/>
    </cofactor>
    <text evidence="1">Binds 2 Mg(2+) ion per subunit.</text>
</comment>
<comment type="subunit">
    <text evidence="1">Homodimer which binds Holliday junction (HJ) DNA. The HJ becomes 2-fold symmetrical on binding to RuvC with unstacked arms; it has a different conformation from HJ DNA in complex with RuvA. In the full resolvosome a probable DNA-RuvA(4)-RuvB(12)-RuvC(2) complex forms which resolves the HJ.</text>
</comment>
<comment type="subcellular location">
    <subcellularLocation>
        <location evidence="1">Cytoplasm</location>
    </subcellularLocation>
</comment>
<comment type="similarity">
    <text evidence="1">Belongs to the RuvC family.</text>
</comment>
<organism>
    <name type="scientific">Christiangramia forsetii (strain DSM 17595 / CGMCC 1.15422 / KT0803)</name>
    <name type="common">Gramella forsetii</name>
    <dbReference type="NCBI Taxonomy" id="411154"/>
    <lineage>
        <taxon>Bacteria</taxon>
        <taxon>Pseudomonadati</taxon>
        <taxon>Bacteroidota</taxon>
        <taxon>Flavobacteriia</taxon>
        <taxon>Flavobacteriales</taxon>
        <taxon>Flavobacteriaceae</taxon>
        <taxon>Christiangramia</taxon>
    </lineage>
</organism>
<keyword id="KW-0963">Cytoplasm</keyword>
<keyword id="KW-0227">DNA damage</keyword>
<keyword id="KW-0233">DNA recombination</keyword>
<keyword id="KW-0234">DNA repair</keyword>
<keyword id="KW-0238">DNA-binding</keyword>
<keyword id="KW-0255">Endonuclease</keyword>
<keyword id="KW-0378">Hydrolase</keyword>
<keyword id="KW-0460">Magnesium</keyword>
<keyword id="KW-0479">Metal-binding</keyword>
<keyword id="KW-0540">Nuclease</keyword>
<proteinExistence type="inferred from homology"/>